<evidence type="ECO:0000255" key="1">
    <source>
        <dbReference type="HAMAP-Rule" id="MF_00124"/>
    </source>
</evidence>
<feature type="chain" id="PRO_0000174976" description="Thymidine kinase">
    <location>
        <begin position="1"/>
        <end position="197"/>
    </location>
</feature>
<feature type="active site" description="Proton acceptor" evidence="1">
    <location>
        <position position="88"/>
    </location>
</feature>
<feature type="binding site" evidence="1">
    <location>
        <begin position="9"/>
        <end position="16"/>
    </location>
    <ligand>
        <name>ATP</name>
        <dbReference type="ChEBI" id="CHEBI:30616"/>
    </ligand>
</feature>
<feature type="binding site" evidence="1">
    <location>
        <begin position="87"/>
        <end position="90"/>
    </location>
    <ligand>
        <name>ATP</name>
        <dbReference type="ChEBI" id="CHEBI:30616"/>
    </ligand>
</feature>
<feature type="binding site" evidence="1">
    <location>
        <position position="145"/>
    </location>
    <ligand>
        <name>Zn(2+)</name>
        <dbReference type="ChEBI" id="CHEBI:29105"/>
    </ligand>
</feature>
<feature type="binding site" evidence="1">
    <location>
        <position position="147"/>
    </location>
    <ligand>
        <name>Zn(2+)</name>
        <dbReference type="ChEBI" id="CHEBI:29105"/>
    </ligand>
</feature>
<feature type="binding site" evidence="1">
    <location>
        <position position="187"/>
    </location>
    <ligand>
        <name>Zn(2+)</name>
        <dbReference type="ChEBI" id="CHEBI:29105"/>
    </ligand>
</feature>
<feature type="binding site" evidence="1">
    <location>
        <position position="190"/>
    </location>
    <ligand>
        <name>Zn(2+)</name>
        <dbReference type="ChEBI" id="CHEBI:29105"/>
    </ligand>
</feature>
<keyword id="KW-0067">ATP-binding</keyword>
<keyword id="KW-0963">Cytoplasm</keyword>
<keyword id="KW-0237">DNA synthesis</keyword>
<keyword id="KW-0418">Kinase</keyword>
<keyword id="KW-0479">Metal-binding</keyword>
<keyword id="KW-0547">Nucleotide-binding</keyword>
<keyword id="KW-1185">Reference proteome</keyword>
<keyword id="KW-0808">Transferase</keyword>
<keyword id="KW-0862">Zinc</keyword>
<accession>Q5NH50</accession>
<gene>
    <name evidence="1" type="primary">tdk</name>
    <name type="ordered locus">FTT_0621</name>
</gene>
<reference key="1">
    <citation type="journal article" date="2005" name="Nat. Genet.">
        <title>The complete genome sequence of Francisella tularensis, the causative agent of tularemia.</title>
        <authorList>
            <person name="Larsson P."/>
            <person name="Oyston P.C.F."/>
            <person name="Chain P."/>
            <person name="Chu M.C."/>
            <person name="Duffield M."/>
            <person name="Fuxelius H.-H."/>
            <person name="Garcia E."/>
            <person name="Haelltorp G."/>
            <person name="Johansson D."/>
            <person name="Isherwood K.E."/>
            <person name="Karp P.D."/>
            <person name="Larsson E."/>
            <person name="Liu Y."/>
            <person name="Michell S."/>
            <person name="Prior J."/>
            <person name="Prior R."/>
            <person name="Malfatti S."/>
            <person name="Sjoestedt A."/>
            <person name="Svensson K."/>
            <person name="Thompson N."/>
            <person name="Vergez L."/>
            <person name="Wagg J.K."/>
            <person name="Wren B.W."/>
            <person name="Lindler L.E."/>
            <person name="Andersson S.G.E."/>
            <person name="Forsman M."/>
            <person name="Titball R.W."/>
        </authorList>
    </citation>
    <scope>NUCLEOTIDE SEQUENCE [LARGE SCALE GENOMIC DNA]</scope>
    <source>
        <strain>SCHU S4 / Schu 4</strain>
    </source>
</reference>
<name>KITH_FRATT</name>
<organism>
    <name type="scientific">Francisella tularensis subsp. tularensis (strain SCHU S4 / Schu 4)</name>
    <dbReference type="NCBI Taxonomy" id="177416"/>
    <lineage>
        <taxon>Bacteria</taxon>
        <taxon>Pseudomonadati</taxon>
        <taxon>Pseudomonadota</taxon>
        <taxon>Gammaproteobacteria</taxon>
        <taxon>Thiotrichales</taxon>
        <taxon>Francisellaceae</taxon>
        <taxon>Francisella</taxon>
    </lineage>
</organism>
<protein>
    <recommendedName>
        <fullName evidence="1">Thymidine kinase</fullName>
        <ecNumber evidence="1">2.7.1.21</ecNumber>
    </recommendedName>
</protein>
<sequence length="197" mass="22473">MAKLYFRYSAMDAGKTLDLLKVAYNYEDRGRKPLVLTSAIDKRAGLNKVKSRIGINQDAYSLTDRDNIFEFVENYNSSNKIDCVLIDEIHFFTQEQVWQLAEIVDELNIPVICYGLRTNYLGQPFETAALLLAIADTLEEVKTICHCGKKASFNMMVQNGKAIKQGNPIVVDDDSLKEIDTKYVSVCRKHWKEGVYE</sequence>
<comment type="catalytic activity">
    <reaction evidence="1">
        <text>thymidine + ATP = dTMP + ADP + H(+)</text>
        <dbReference type="Rhea" id="RHEA:19129"/>
        <dbReference type="ChEBI" id="CHEBI:15378"/>
        <dbReference type="ChEBI" id="CHEBI:17748"/>
        <dbReference type="ChEBI" id="CHEBI:30616"/>
        <dbReference type="ChEBI" id="CHEBI:63528"/>
        <dbReference type="ChEBI" id="CHEBI:456216"/>
        <dbReference type="EC" id="2.7.1.21"/>
    </reaction>
</comment>
<comment type="subunit">
    <text evidence="1">Homotetramer.</text>
</comment>
<comment type="subcellular location">
    <subcellularLocation>
        <location evidence="1">Cytoplasm</location>
    </subcellularLocation>
</comment>
<comment type="similarity">
    <text evidence="1">Belongs to the thymidine kinase family.</text>
</comment>
<dbReference type="EC" id="2.7.1.21" evidence="1"/>
<dbReference type="EMBL" id="AJ749949">
    <property type="protein sequence ID" value="CAG45254.1"/>
    <property type="molecule type" value="Genomic_DNA"/>
</dbReference>
<dbReference type="RefSeq" id="WP_003029109.1">
    <property type="nucleotide sequence ID" value="NC_006570.2"/>
</dbReference>
<dbReference type="RefSeq" id="YP_169642.1">
    <property type="nucleotide sequence ID" value="NC_006570.2"/>
</dbReference>
<dbReference type="SMR" id="Q5NH50"/>
<dbReference type="IntAct" id="Q5NH50">
    <property type="interactions" value="1"/>
</dbReference>
<dbReference type="STRING" id="177416.FTT_0621"/>
<dbReference type="DNASU" id="3190754"/>
<dbReference type="EnsemblBacteria" id="CAG45254">
    <property type="protein sequence ID" value="CAG45254"/>
    <property type="gene ID" value="FTT_0621"/>
</dbReference>
<dbReference type="KEGG" id="ftu:FTT_0621"/>
<dbReference type="eggNOG" id="COG1435">
    <property type="taxonomic scope" value="Bacteria"/>
</dbReference>
<dbReference type="OrthoDB" id="9781579at2"/>
<dbReference type="Proteomes" id="UP000001174">
    <property type="component" value="Chromosome"/>
</dbReference>
<dbReference type="GO" id="GO:0005829">
    <property type="term" value="C:cytosol"/>
    <property type="evidence" value="ECO:0007669"/>
    <property type="project" value="TreeGrafter"/>
</dbReference>
<dbReference type="GO" id="GO:0005524">
    <property type="term" value="F:ATP binding"/>
    <property type="evidence" value="ECO:0007669"/>
    <property type="project" value="UniProtKB-UniRule"/>
</dbReference>
<dbReference type="GO" id="GO:0004797">
    <property type="term" value="F:thymidine kinase activity"/>
    <property type="evidence" value="ECO:0007669"/>
    <property type="project" value="UniProtKB-UniRule"/>
</dbReference>
<dbReference type="GO" id="GO:0008270">
    <property type="term" value="F:zinc ion binding"/>
    <property type="evidence" value="ECO:0007669"/>
    <property type="project" value="UniProtKB-UniRule"/>
</dbReference>
<dbReference type="GO" id="GO:0071897">
    <property type="term" value="P:DNA biosynthetic process"/>
    <property type="evidence" value="ECO:0007669"/>
    <property type="project" value="UniProtKB-KW"/>
</dbReference>
<dbReference type="GO" id="GO:0046104">
    <property type="term" value="P:thymidine metabolic process"/>
    <property type="evidence" value="ECO:0007669"/>
    <property type="project" value="TreeGrafter"/>
</dbReference>
<dbReference type="Gene3D" id="3.40.50.300">
    <property type="entry name" value="P-loop containing nucleotide triphosphate hydrolases"/>
    <property type="match status" value="1"/>
</dbReference>
<dbReference type="HAMAP" id="MF_00124">
    <property type="entry name" value="Thymidine_kinase"/>
    <property type="match status" value="1"/>
</dbReference>
<dbReference type="InterPro" id="IPR027417">
    <property type="entry name" value="P-loop_NTPase"/>
</dbReference>
<dbReference type="InterPro" id="IPR001267">
    <property type="entry name" value="Thymidine_kinase"/>
</dbReference>
<dbReference type="NCBIfam" id="NF003300">
    <property type="entry name" value="PRK04296.1-5"/>
    <property type="match status" value="1"/>
</dbReference>
<dbReference type="PANTHER" id="PTHR11441">
    <property type="entry name" value="THYMIDINE KINASE"/>
    <property type="match status" value="1"/>
</dbReference>
<dbReference type="PANTHER" id="PTHR11441:SF0">
    <property type="entry name" value="THYMIDINE KINASE, CYTOSOLIC"/>
    <property type="match status" value="1"/>
</dbReference>
<dbReference type="Pfam" id="PF00265">
    <property type="entry name" value="TK"/>
    <property type="match status" value="1"/>
</dbReference>
<dbReference type="PIRSF" id="PIRSF035805">
    <property type="entry name" value="TK_cell"/>
    <property type="match status" value="1"/>
</dbReference>
<dbReference type="SUPFAM" id="SSF57716">
    <property type="entry name" value="Glucocorticoid receptor-like (DNA-binding domain)"/>
    <property type="match status" value="1"/>
</dbReference>
<dbReference type="SUPFAM" id="SSF52540">
    <property type="entry name" value="P-loop containing nucleoside triphosphate hydrolases"/>
    <property type="match status" value="1"/>
</dbReference>
<proteinExistence type="inferred from homology"/>